<keyword id="KW-0010">Activator</keyword>
<keyword id="KW-0963">Cytoplasm</keyword>
<keyword id="KW-0221">Differentiation</keyword>
<keyword id="KW-0238">DNA-binding</keyword>
<keyword id="KW-0539">Nucleus</keyword>
<keyword id="KW-0597">Phosphoprotein</keyword>
<keyword id="KW-1185">Reference proteome</keyword>
<keyword id="KW-0678">Repressor</keyword>
<keyword id="KW-0804">Transcription</keyword>
<keyword id="KW-0805">Transcription regulation</keyword>
<organism>
    <name type="scientific">Rattus norvegicus</name>
    <name type="common">Rat</name>
    <dbReference type="NCBI Taxonomy" id="10116"/>
    <lineage>
        <taxon>Eukaryota</taxon>
        <taxon>Metazoa</taxon>
        <taxon>Chordata</taxon>
        <taxon>Craniata</taxon>
        <taxon>Vertebrata</taxon>
        <taxon>Euteleostomi</taxon>
        <taxon>Mammalia</taxon>
        <taxon>Eutheria</taxon>
        <taxon>Euarchontoglires</taxon>
        <taxon>Glires</taxon>
        <taxon>Rodentia</taxon>
        <taxon>Myomorpha</taxon>
        <taxon>Muroidea</taxon>
        <taxon>Muridae</taxon>
        <taxon>Murinae</taxon>
        <taxon>Rattus</taxon>
    </lineage>
</organism>
<protein>
    <recommendedName>
        <fullName>Basic leucine zipper transcriptional factor ATF-like</fullName>
    </recommendedName>
    <alternativeName>
        <fullName>B-cell-activating transcription factor</fullName>
        <shortName>B-ATF</shortName>
    </alternativeName>
</protein>
<evidence type="ECO:0000250" key="1"/>
<evidence type="ECO:0000250" key="2">
    <source>
        <dbReference type="UniProtKB" id="O35284"/>
    </source>
</evidence>
<evidence type="ECO:0000255" key="3">
    <source>
        <dbReference type="PROSITE-ProRule" id="PRU00978"/>
    </source>
</evidence>
<evidence type="ECO:0000256" key="4">
    <source>
        <dbReference type="SAM" id="MobiDB-lite"/>
    </source>
</evidence>
<evidence type="ECO:0000305" key="5"/>
<proteinExistence type="inferred from homology"/>
<comment type="function">
    <text evidence="1">AP-1 family transcription factor that controls the differentiation of lineage-specific cells in the immune system: specifically mediates the differentiation of T-helper 17 cells (Th17), follicular T-helper cells (TfH), CD8(+) dendritic cells and class-switch recombination (CSR) in B-cells. Acts via the formation of a heterodimer with JUNB that recognizes and binds DNA sequence 5'-TGA[CG]TCA-3'. The BATF-JUNB heterodimer also forms a complex with IRF4 (or IRF8) in immune cells, leading to recognition of AICE sequence (5'-TGAnTCA/GAAA-3'), an immune-specific regulatory element, followed by cooperative binding of BATF and IRF4 (or IRF8) and activation of genes. Controls differentiation of T-helper cells producing interleukin-17 (Th17 cells) by binding to Th17-associated gene promoters: regulates expression of the transcription factor RORC itself and RORC target genes such as IL17 (IL17A or IL17B). Also involved in differentiation of follicular T-helper cells (TfH) by directing expression of BCL6 and MAF. In B-cells, involved in class-switch recombination (CSR) by controlling the expression of both AICDA and of germline transcripts of the intervening heavy-chain region and constant heavy-chain region (I(H)-C(H)). Following infection, can participate in CD8(+) dendritic cell differentiation via interaction with IRF4 and IRF8 to mediate cooperative gene activation. Regulates effector CD8(+) T-cell differentiation by regulating expression of SIRT1. Following DNA damage, part of a differentiation checkpoint that limits self-renewal of hematopoietic stem cells (HSCs): up-regulated by STAT3, leading to differentiation of HSCs, thereby restricting self-renewal of HSCs (By similarity).</text>
</comment>
<comment type="subunit">
    <text evidence="1">Heterodimer; mainly heterodimerizes with JUNB. The BATF-JUNB heterodimer interacts with IRF4 and IRF8. Interacts (via bZIP domain) with IRF4 and IRF8; the interaction is direct. Also forms heterodimers with JUN and JUND. Interacts with IFI35 (By similarity).</text>
</comment>
<comment type="subcellular location">
    <subcellularLocation>
        <location evidence="3">Nucleus</location>
    </subcellularLocation>
    <subcellularLocation>
        <location evidence="1">Cytoplasm</location>
    </subcellularLocation>
    <text evidence="1">Present in the nucleus and cytoplasm, but shows increased nuclear translocation after activation of T-cells.</text>
</comment>
<comment type="PTM">
    <text evidence="1">Phosphorylated on serine and threonine residues and at least one tyrosine residue. Phosphorylation at Ser-43 inhibit DNA binding activity and transforms it as a negative regulator of AP-1 mediated transcription (By similarity).</text>
</comment>
<comment type="similarity">
    <text evidence="5">Belongs to the bZIP family.</text>
</comment>
<accession>D4A7E1</accession>
<sequence length="125" mass="14065">MPHSSDSSDSSFSRSPPPGKQDSSDDVRKVQRREKNRIAAQKSRQRQTQKADTLHLESEDLEKQNAALRKEIKQLTEELKYFTSVLSSHEPLCSVLASGTPSPPEVVYSAHAFHQPHISSPRFQP</sequence>
<dbReference type="EMBL" id="CH473982">
    <property type="protein sequence ID" value="EDL81581.1"/>
    <property type="molecule type" value="Genomic_DNA"/>
</dbReference>
<dbReference type="RefSeq" id="NP_001100218.1">
    <property type="nucleotide sequence ID" value="NM_001106748.1"/>
</dbReference>
<dbReference type="RefSeq" id="XP_008762980.1">
    <property type="nucleotide sequence ID" value="XM_008764758.2"/>
</dbReference>
<dbReference type="SMR" id="D4A7E1"/>
<dbReference type="FunCoup" id="D4A7E1">
    <property type="interactions" value="156"/>
</dbReference>
<dbReference type="STRING" id="10116.ENSRNOP00000011563"/>
<dbReference type="PhosphoSitePlus" id="D4A7E1"/>
<dbReference type="PaxDb" id="10116-ENSRNOP00000011563"/>
<dbReference type="Ensembl" id="ENSRNOT00000011563.8">
    <property type="protein sequence ID" value="ENSRNOP00000011563.4"/>
    <property type="gene ID" value="ENSRNOG00000008588.8"/>
</dbReference>
<dbReference type="GeneID" id="299206"/>
<dbReference type="KEGG" id="rno:299206"/>
<dbReference type="UCSC" id="RGD:1304923">
    <property type="organism name" value="rat"/>
</dbReference>
<dbReference type="AGR" id="RGD:1304923"/>
<dbReference type="CTD" id="10538"/>
<dbReference type="RGD" id="1304923">
    <property type="gene designation" value="Batf"/>
</dbReference>
<dbReference type="eggNOG" id="KOG1414">
    <property type="taxonomic scope" value="Eukaryota"/>
</dbReference>
<dbReference type="GeneTree" id="ENSGT00940000159745"/>
<dbReference type="HOGENOM" id="CLU_088612_4_0_1"/>
<dbReference type="InParanoid" id="D4A7E1"/>
<dbReference type="OMA" id="NSHETHC"/>
<dbReference type="OrthoDB" id="295274at2759"/>
<dbReference type="PhylomeDB" id="D4A7E1"/>
<dbReference type="TreeFam" id="TF332340"/>
<dbReference type="PRO" id="PR:D4A7E1"/>
<dbReference type="Proteomes" id="UP000002494">
    <property type="component" value="Chromosome 6"/>
</dbReference>
<dbReference type="Proteomes" id="UP000234681">
    <property type="component" value="Chromosome 6"/>
</dbReference>
<dbReference type="Bgee" id="ENSRNOG00000008588">
    <property type="expression patterns" value="Expressed in thymus and 13 other cell types or tissues"/>
</dbReference>
<dbReference type="GO" id="GO:0005737">
    <property type="term" value="C:cytoplasm"/>
    <property type="evidence" value="ECO:0000250"/>
    <property type="project" value="UniProtKB"/>
</dbReference>
<dbReference type="GO" id="GO:0005654">
    <property type="term" value="C:nucleoplasm"/>
    <property type="evidence" value="ECO:0007669"/>
    <property type="project" value="Ensembl"/>
</dbReference>
<dbReference type="GO" id="GO:0005634">
    <property type="term" value="C:nucleus"/>
    <property type="evidence" value="ECO:0000250"/>
    <property type="project" value="UniProtKB"/>
</dbReference>
<dbReference type="GO" id="GO:0090575">
    <property type="term" value="C:RNA polymerase II transcription regulator complex"/>
    <property type="evidence" value="ECO:0000266"/>
    <property type="project" value="RGD"/>
</dbReference>
<dbReference type="GO" id="GO:0001228">
    <property type="term" value="F:DNA-binding transcription activator activity, RNA polymerase II-specific"/>
    <property type="evidence" value="ECO:0000266"/>
    <property type="project" value="RGD"/>
</dbReference>
<dbReference type="GO" id="GO:0003700">
    <property type="term" value="F:DNA-binding transcription factor activity"/>
    <property type="evidence" value="ECO:0000250"/>
    <property type="project" value="UniProtKB"/>
</dbReference>
<dbReference type="GO" id="GO:0000981">
    <property type="term" value="F:DNA-binding transcription factor activity, RNA polymerase II-specific"/>
    <property type="evidence" value="ECO:0000318"/>
    <property type="project" value="GO_Central"/>
</dbReference>
<dbReference type="GO" id="GO:0000978">
    <property type="term" value="F:RNA polymerase II cis-regulatory region sequence-specific DNA binding"/>
    <property type="evidence" value="ECO:0000266"/>
    <property type="project" value="RGD"/>
</dbReference>
<dbReference type="GO" id="GO:0043565">
    <property type="term" value="F:sequence-specific DNA binding"/>
    <property type="evidence" value="ECO:0000250"/>
    <property type="project" value="UniProtKB"/>
</dbReference>
<dbReference type="GO" id="GO:1990837">
    <property type="term" value="F:sequence-specific double-stranded DNA binding"/>
    <property type="evidence" value="ECO:0000266"/>
    <property type="project" value="RGD"/>
</dbReference>
<dbReference type="GO" id="GO:0042832">
    <property type="term" value="P:defense response to protozoan"/>
    <property type="evidence" value="ECO:0000250"/>
    <property type="project" value="UniProtKB"/>
</dbReference>
<dbReference type="GO" id="GO:0006974">
    <property type="term" value="P:DNA damage response"/>
    <property type="evidence" value="ECO:0000250"/>
    <property type="project" value="UniProtKB"/>
</dbReference>
<dbReference type="GO" id="GO:0030330">
    <property type="term" value="P:DNA damage response, signal transduction by p53 class mediator"/>
    <property type="evidence" value="ECO:0000250"/>
    <property type="project" value="UniProtKB"/>
</dbReference>
<dbReference type="GO" id="GO:0060218">
    <property type="term" value="P:hematopoietic stem cell differentiation"/>
    <property type="evidence" value="ECO:0000250"/>
    <property type="project" value="UniProtKB"/>
</dbReference>
<dbReference type="GO" id="GO:0045190">
    <property type="term" value="P:isotype switching"/>
    <property type="evidence" value="ECO:0000250"/>
    <property type="project" value="UniProtKB"/>
</dbReference>
<dbReference type="GO" id="GO:0002320">
    <property type="term" value="P:lymphoid progenitor cell differentiation"/>
    <property type="evidence" value="ECO:0000250"/>
    <property type="project" value="UniProtKB"/>
</dbReference>
<dbReference type="GO" id="GO:0043011">
    <property type="term" value="P:myeloid dendritic cell differentiation"/>
    <property type="evidence" value="ECO:0000250"/>
    <property type="project" value="UniProtKB"/>
</dbReference>
<dbReference type="GO" id="GO:0001819">
    <property type="term" value="P:positive regulation of cytokine production"/>
    <property type="evidence" value="ECO:0000250"/>
    <property type="project" value="UniProtKB"/>
</dbReference>
<dbReference type="GO" id="GO:0045944">
    <property type="term" value="P:positive regulation of transcription by RNA polymerase II"/>
    <property type="evidence" value="ECO:0000266"/>
    <property type="project" value="RGD"/>
</dbReference>
<dbReference type="GO" id="GO:0006357">
    <property type="term" value="P:regulation of transcription by RNA polymerase II"/>
    <property type="evidence" value="ECO:0000318"/>
    <property type="project" value="GO_Central"/>
</dbReference>
<dbReference type="GO" id="GO:0072539">
    <property type="term" value="P:T-helper 17 cell differentiation"/>
    <property type="evidence" value="ECO:0000250"/>
    <property type="project" value="UniProtKB"/>
</dbReference>
<dbReference type="GO" id="GO:0072540">
    <property type="term" value="P:T-helper 17 cell lineage commitment"/>
    <property type="evidence" value="ECO:0000250"/>
    <property type="project" value="UniProtKB"/>
</dbReference>
<dbReference type="GO" id="GO:0045064">
    <property type="term" value="P:T-helper 2 cell differentiation"/>
    <property type="evidence" value="ECO:0000250"/>
    <property type="project" value="UniProtKB"/>
</dbReference>
<dbReference type="CDD" id="cd14701">
    <property type="entry name" value="bZIP_BATF"/>
    <property type="match status" value="1"/>
</dbReference>
<dbReference type="FunFam" id="1.20.5.170:FF:000043">
    <property type="entry name" value="Basic leucine zipper transcriptional factor ATF-like"/>
    <property type="match status" value="1"/>
</dbReference>
<dbReference type="Gene3D" id="1.20.5.170">
    <property type="match status" value="1"/>
</dbReference>
<dbReference type="InterPro" id="IPR000837">
    <property type="entry name" value="AP-1"/>
</dbReference>
<dbReference type="InterPro" id="IPR004827">
    <property type="entry name" value="bZIP"/>
</dbReference>
<dbReference type="InterPro" id="IPR046347">
    <property type="entry name" value="bZIP_sf"/>
</dbReference>
<dbReference type="PANTHER" id="PTHR23351:SF14">
    <property type="entry name" value="BASIC LEUCINE ZIPPER TRANSCRIPTIONAL FACTOR ATF-LIKE"/>
    <property type="match status" value="1"/>
</dbReference>
<dbReference type="PANTHER" id="PTHR23351">
    <property type="entry name" value="FOS TRANSCRIPTION FACTOR-RELATED"/>
    <property type="match status" value="1"/>
</dbReference>
<dbReference type="Pfam" id="PF00170">
    <property type="entry name" value="bZIP_1"/>
    <property type="match status" value="1"/>
</dbReference>
<dbReference type="PRINTS" id="PR00042">
    <property type="entry name" value="LEUZIPPRFOS"/>
</dbReference>
<dbReference type="SMART" id="SM00338">
    <property type="entry name" value="BRLZ"/>
    <property type="match status" value="1"/>
</dbReference>
<dbReference type="SUPFAM" id="SSF57959">
    <property type="entry name" value="Leucine zipper domain"/>
    <property type="match status" value="1"/>
</dbReference>
<dbReference type="PROSITE" id="PS50217">
    <property type="entry name" value="BZIP"/>
    <property type="match status" value="1"/>
</dbReference>
<dbReference type="PROSITE" id="PS00036">
    <property type="entry name" value="BZIP_BASIC"/>
    <property type="match status" value="1"/>
</dbReference>
<name>BATF_RAT</name>
<gene>
    <name type="primary">Batf</name>
</gene>
<feature type="chain" id="PRO_0000420464" description="Basic leucine zipper transcriptional factor ATF-like">
    <location>
        <begin position="1"/>
        <end position="125"/>
    </location>
</feature>
<feature type="domain" description="bZIP" evidence="3">
    <location>
        <begin position="26"/>
        <end position="89"/>
    </location>
</feature>
<feature type="region of interest" description="Disordered" evidence="4">
    <location>
        <begin position="1"/>
        <end position="59"/>
    </location>
</feature>
<feature type="region of interest" description="Basic motif">
    <location>
        <begin position="28"/>
        <end position="50"/>
    </location>
</feature>
<feature type="region of interest" description="Leucine-zipper">
    <location>
        <begin position="54"/>
        <end position="75"/>
    </location>
</feature>
<feature type="compositionally biased region" description="Low complexity" evidence="4">
    <location>
        <begin position="1"/>
        <end position="14"/>
    </location>
</feature>
<feature type="modified residue" description="Phosphoserine" evidence="2">
    <location>
        <position position="43"/>
    </location>
</feature>
<feature type="modified residue" description="Phosphothreonine" evidence="2">
    <location>
        <position position="48"/>
    </location>
</feature>
<reference key="1">
    <citation type="journal article" date="2004" name="Nature">
        <title>Genome sequence of the Brown Norway rat yields insights into mammalian evolution.</title>
        <authorList>
            <person name="Gibbs R.A."/>
            <person name="Weinstock G.M."/>
            <person name="Metzker M.L."/>
            <person name="Muzny D.M."/>
            <person name="Sodergren E.J."/>
            <person name="Scherer S."/>
            <person name="Scott G."/>
            <person name="Steffen D."/>
            <person name="Worley K.C."/>
            <person name="Burch P.E."/>
            <person name="Okwuonu G."/>
            <person name="Hines S."/>
            <person name="Lewis L."/>
            <person name="Deramo C."/>
            <person name="Delgado O."/>
            <person name="Dugan-Rocha S."/>
            <person name="Miner G."/>
            <person name="Morgan M."/>
            <person name="Hawes A."/>
            <person name="Gill R."/>
            <person name="Holt R.A."/>
            <person name="Adams M.D."/>
            <person name="Amanatides P.G."/>
            <person name="Baden-Tillson H."/>
            <person name="Barnstead M."/>
            <person name="Chin S."/>
            <person name="Evans C.A."/>
            <person name="Ferriera S."/>
            <person name="Fosler C."/>
            <person name="Glodek A."/>
            <person name="Gu Z."/>
            <person name="Jennings D."/>
            <person name="Kraft C.L."/>
            <person name="Nguyen T."/>
            <person name="Pfannkoch C.M."/>
            <person name="Sitter C."/>
            <person name="Sutton G.G."/>
            <person name="Venter J.C."/>
            <person name="Woodage T."/>
            <person name="Smith D."/>
            <person name="Lee H.-M."/>
            <person name="Gustafson E."/>
            <person name="Cahill P."/>
            <person name="Kana A."/>
            <person name="Doucette-Stamm L."/>
            <person name="Weinstock K."/>
            <person name="Fechtel K."/>
            <person name="Weiss R.B."/>
            <person name="Dunn D.M."/>
            <person name="Green E.D."/>
            <person name="Blakesley R.W."/>
            <person name="Bouffard G.G."/>
            <person name="De Jong P.J."/>
            <person name="Osoegawa K."/>
            <person name="Zhu B."/>
            <person name="Marra M."/>
            <person name="Schein J."/>
            <person name="Bosdet I."/>
            <person name="Fjell C."/>
            <person name="Jones S."/>
            <person name="Krzywinski M."/>
            <person name="Mathewson C."/>
            <person name="Siddiqui A."/>
            <person name="Wye N."/>
            <person name="McPherson J."/>
            <person name="Zhao S."/>
            <person name="Fraser C.M."/>
            <person name="Shetty J."/>
            <person name="Shatsman S."/>
            <person name="Geer K."/>
            <person name="Chen Y."/>
            <person name="Abramzon S."/>
            <person name="Nierman W.C."/>
            <person name="Havlak P.H."/>
            <person name="Chen R."/>
            <person name="Durbin K.J."/>
            <person name="Egan A."/>
            <person name="Ren Y."/>
            <person name="Song X.-Z."/>
            <person name="Li B."/>
            <person name="Liu Y."/>
            <person name="Qin X."/>
            <person name="Cawley S."/>
            <person name="Cooney A.J."/>
            <person name="D'Souza L.M."/>
            <person name="Martin K."/>
            <person name="Wu J.Q."/>
            <person name="Gonzalez-Garay M.L."/>
            <person name="Jackson A.R."/>
            <person name="Kalafus K.J."/>
            <person name="McLeod M.P."/>
            <person name="Milosavljevic A."/>
            <person name="Virk D."/>
            <person name="Volkov A."/>
            <person name="Wheeler D.A."/>
            <person name="Zhang Z."/>
            <person name="Bailey J.A."/>
            <person name="Eichler E.E."/>
            <person name="Tuzun E."/>
            <person name="Birney E."/>
            <person name="Mongin E."/>
            <person name="Ureta-Vidal A."/>
            <person name="Woodwark C."/>
            <person name="Zdobnov E."/>
            <person name="Bork P."/>
            <person name="Suyama M."/>
            <person name="Torrents D."/>
            <person name="Alexandersson M."/>
            <person name="Trask B.J."/>
            <person name="Young J.M."/>
            <person name="Huang H."/>
            <person name="Wang H."/>
            <person name="Xing H."/>
            <person name="Daniels S."/>
            <person name="Gietzen D."/>
            <person name="Schmidt J."/>
            <person name="Stevens K."/>
            <person name="Vitt U."/>
            <person name="Wingrove J."/>
            <person name="Camara F."/>
            <person name="Mar Alba M."/>
            <person name="Abril J.F."/>
            <person name="Guigo R."/>
            <person name="Smit A."/>
            <person name="Dubchak I."/>
            <person name="Rubin E.M."/>
            <person name="Couronne O."/>
            <person name="Poliakov A."/>
            <person name="Huebner N."/>
            <person name="Ganten D."/>
            <person name="Goesele C."/>
            <person name="Hummel O."/>
            <person name="Kreitler T."/>
            <person name="Lee Y.-A."/>
            <person name="Monti J."/>
            <person name="Schulz H."/>
            <person name="Zimdahl H."/>
            <person name="Himmelbauer H."/>
            <person name="Lehrach H."/>
            <person name="Jacob H.J."/>
            <person name="Bromberg S."/>
            <person name="Gullings-Handley J."/>
            <person name="Jensen-Seaman M.I."/>
            <person name="Kwitek A.E."/>
            <person name="Lazar J."/>
            <person name="Pasko D."/>
            <person name="Tonellato P.J."/>
            <person name="Twigger S."/>
            <person name="Ponting C.P."/>
            <person name="Duarte J.M."/>
            <person name="Rice S."/>
            <person name="Goodstadt L."/>
            <person name="Beatson S.A."/>
            <person name="Emes R.D."/>
            <person name="Winter E.E."/>
            <person name="Webber C."/>
            <person name="Brandt P."/>
            <person name="Nyakatura G."/>
            <person name="Adetobi M."/>
            <person name="Chiaromonte F."/>
            <person name="Elnitski L."/>
            <person name="Eswara P."/>
            <person name="Hardison R.C."/>
            <person name="Hou M."/>
            <person name="Kolbe D."/>
            <person name="Makova K."/>
            <person name="Miller W."/>
            <person name="Nekrutenko A."/>
            <person name="Riemer C."/>
            <person name="Schwartz S."/>
            <person name="Taylor J."/>
            <person name="Yang S."/>
            <person name="Zhang Y."/>
            <person name="Lindpaintner K."/>
            <person name="Andrews T.D."/>
            <person name="Caccamo M."/>
            <person name="Clamp M."/>
            <person name="Clarke L."/>
            <person name="Curwen V."/>
            <person name="Durbin R.M."/>
            <person name="Eyras E."/>
            <person name="Searle S.M."/>
            <person name="Cooper G.M."/>
            <person name="Batzoglou S."/>
            <person name="Brudno M."/>
            <person name="Sidow A."/>
            <person name="Stone E.A."/>
            <person name="Payseur B.A."/>
            <person name="Bourque G."/>
            <person name="Lopez-Otin C."/>
            <person name="Puente X.S."/>
            <person name="Chakrabarti K."/>
            <person name="Chatterji S."/>
            <person name="Dewey C."/>
            <person name="Pachter L."/>
            <person name="Bray N."/>
            <person name="Yap V.B."/>
            <person name="Caspi A."/>
            <person name="Tesler G."/>
            <person name="Pevzner P.A."/>
            <person name="Haussler D."/>
            <person name="Roskin K.M."/>
            <person name="Baertsch R."/>
            <person name="Clawson H."/>
            <person name="Furey T.S."/>
            <person name="Hinrichs A.S."/>
            <person name="Karolchik D."/>
            <person name="Kent W.J."/>
            <person name="Rosenbloom K.R."/>
            <person name="Trumbower H."/>
            <person name="Weirauch M."/>
            <person name="Cooper D.N."/>
            <person name="Stenson P.D."/>
            <person name="Ma B."/>
            <person name="Brent M."/>
            <person name="Arumugam M."/>
            <person name="Shteynberg D."/>
            <person name="Copley R.R."/>
            <person name="Taylor M.S."/>
            <person name="Riethman H."/>
            <person name="Mudunuri U."/>
            <person name="Peterson J."/>
            <person name="Guyer M."/>
            <person name="Felsenfeld A."/>
            <person name="Old S."/>
            <person name="Mockrin S."/>
            <person name="Collins F.S."/>
        </authorList>
    </citation>
    <scope>NUCLEOTIDE SEQUENCE [LARGE SCALE GENOMIC DNA]</scope>
    <source>
        <strain>Brown Norway</strain>
    </source>
</reference>
<reference key="2">
    <citation type="submission" date="2005-07" db="EMBL/GenBank/DDBJ databases">
        <authorList>
            <person name="Mural R.J."/>
            <person name="Adams M.D."/>
            <person name="Myers E.W."/>
            <person name="Smith H.O."/>
            <person name="Venter J.C."/>
        </authorList>
    </citation>
    <scope>NUCLEOTIDE SEQUENCE [LARGE SCALE GENOMIC DNA]</scope>
    <source>
        <strain>Brown Norway</strain>
    </source>
</reference>